<reference key="1">
    <citation type="journal article" date="2005" name="Nucleic Acids Res.">
        <title>Genome dynamics and diversity of Shigella species, the etiologic agents of bacillary dysentery.</title>
        <authorList>
            <person name="Yang F."/>
            <person name="Yang J."/>
            <person name="Zhang X."/>
            <person name="Chen L."/>
            <person name="Jiang Y."/>
            <person name="Yan Y."/>
            <person name="Tang X."/>
            <person name="Wang J."/>
            <person name="Xiong Z."/>
            <person name="Dong J."/>
            <person name="Xue Y."/>
            <person name="Zhu Y."/>
            <person name="Xu X."/>
            <person name="Sun L."/>
            <person name="Chen S."/>
            <person name="Nie H."/>
            <person name="Peng J."/>
            <person name="Xu J."/>
            <person name="Wang Y."/>
            <person name="Yuan Z."/>
            <person name="Wen Y."/>
            <person name="Yao Z."/>
            <person name="Shen Y."/>
            <person name="Qiang B."/>
            <person name="Hou Y."/>
            <person name="Yu J."/>
            <person name="Jin Q."/>
        </authorList>
    </citation>
    <scope>NUCLEOTIDE SEQUENCE [LARGE SCALE GENOMIC DNA]</scope>
    <source>
        <strain>Ss046</strain>
    </source>
</reference>
<keyword id="KW-0007">Acetylation</keyword>
<keyword id="KW-0028">Amino-acid biosynthesis</keyword>
<keyword id="KW-0963">Cytoplasm</keyword>
<keyword id="KW-0554">One-carbon metabolism</keyword>
<keyword id="KW-0663">Pyridoxal phosphate</keyword>
<keyword id="KW-1185">Reference proteome</keyword>
<keyword id="KW-0808">Transferase</keyword>
<feature type="chain" id="PRO_0000235023" description="Serine hydroxymethyltransferase">
    <location>
        <begin position="1"/>
        <end position="417"/>
    </location>
</feature>
<feature type="binding site" evidence="1">
    <location>
        <position position="121"/>
    </location>
    <ligand>
        <name>(6S)-5,6,7,8-tetrahydrofolate</name>
        <dbReference type="ChEBI" id="CHEBI:57453"/>
    </ligand>
</feature>
<feature type="binding site" evidence="1">
    <location>
        <begin position="125"/>
        <end position="127"/>
    </location>
    <ligand>
        <name>(6S)-5,6,7,8-tetrahydrofolate</name>
        <dbReference type="ChEBI" id="CHEBI:57453"/>
    </ligand>
</feature>
<feature type="binding site" evidence="1">
    <location>
        <begin position="355"/>
        <end position="357"/>
    </location>
    <ligand>
        <name>(6S)-5,6,7,8-tetrahydrofolate</name>
        <dbReference type="ChEBI" id="CHEBI:57453"/>
    </ligand>
</feature>
<feature type="site" description="Plays an important role in substrate specificity" evidence="1">
    <location>
        <position position="228"/>
    </location>
</feature>
<feature type="modified residue" description="N6-acetyllysine" evidence="1">
    <location>
        <position position="54"/>
    </location>
</feature>
<feature type="modified residue" description="N6-(pyridoxal phosphate)lysine" evidence="1">
    <location>
        <position position="229"/>
    </location>
</feature>
<feature type="modified residue" description="N6-acetyllysine" evidence="1">
    <location>
        <position position="250"/>
    </location>
</feature>
<feature type="modified residue" description="N6-acetyllysine" evidence="1">
    <location>
        <position position="285"/>
    </location>
</feature>
<feature type="modified residue" description="N6-acetyllysine" evidence="1">
    <location>
        <position position="354"/>
    </location>
</feature>
<feature type="modified residue" description="N6-acetyllysine" evidence="1">
    <location>
        <position position="375"/>
    </location>
</feature>
<name>GLYA_SHISS</name>
<dbReference type="EC" id="2.1.2.1" evidence="1"/>
<dbReference type="EMBL" id="CP000038">
    <property type="protein sequence ID" value="AAZ89258.1"/>
    <property type="molecule type" value="Genomic_DNA"/>
</dbReference>
<dbReference type="RefSeq" id="WP_000919158.1">
    <property type="nucleotide sequence ID" value="NC_007384.1"/>
</dbReference>
<dbReference type="SMR" id="Q3YZ04"/>
<dbReference type="GeneID" id="93774584"/>
<dbReference type="KEGG" id="ssn:SSON_2634"/>
<dbReference type="HOGENOM" id="CLU_022477_2_1_6"/>
<dbReference type="UniPathway" id="UPA00193"/>
<dbReference type="UniPathway" id="UPA00288">
    <property type="reaction ID" value="UER01023"/>
</dbReference>
<dbReference type="Proteomes" id="UP000002529">
    <property type="component" value="Chromosome"/>
</dbReference>
<dbReference type="GO" id="GO:0005829">
    <property type="term" value="C:cytosol"/>
    <property type="evidence" value="ECO:0007669"/>
    <property type="project" value="TreeGrafter"/>
</dbReference>
<dbReference type="GO" id="GO:0004372">
    <property type="term" value="F:glycine hydroxymethyltransferase activity"/>
    <property type="evidence" value="ECO:0007669"/>
    <property type="project" value="UniProtKB-UniRule"/>
</dbReference>
<dbReference type="GO" id="GO:0030170">
    <property type="term" value="F:pyridoxal phosphate binding"/>
    <property type="evidence" value="ECO:0007669"/>
    <property type="project" value="UniProtKB-UniRule"/>
</dbReference>
<dbReference type="GO" id="GO:0019264">
    <property type="term" value="P:glycine biosynthetic process from serine"/>
    <property type="evidence" value="ECO:0007669"/>
    <property type="project" value="UniProtKB-UniRule"/>
</dbReference>
<dbReference type="GO" id="GO:0035999">
    <property type="term" value="P:tetrahydrofolate interconversion"/>
    <property type="evidence" value="ECO:0007669"/>
    <property type="project" value="UniProtKB-UniRule"/>
</dbReference>
<dbReference type="CDD" id="cd00378">
    <property type="entry name" value="SHMT"/>
    <property type="match status" value="1"/>
</dbReference>
<dbReference type="FunFam" id="3.40.640.10:FF:000001">
    <property type="entry name" value="Serine hydroxymethyltransferase"/>
    <property type="match status" value="1"/>
</dbReference>
<dbReference type="FunFam" id="3.90.1150.10:FF:000003">
    <property type="entry name" value="Serine hydroxymethyltransferase"/>
    <property type="match status" value="1"/>
</dbReference>
<dbReference type="Gene3D" id="3.90.1150.10">
    <property type="entry name" value="Aspartate Aminotransferase, domain 1"/>
    <property type="match status" value="1"/>
</dbReference>
<dbReference type="Gene3D" id="3.40.640.10">
    <property type="entry name" value="Type I PLP-dependent aspartate aminotransferase-like (Major domain)"/>
    <property type="match status" value="1"/>
</dbReference>
<dbReference type="HAMAP" id="MF_00051">
    <property type="entry name" value="SHMT"/>
    <property type="match status" value="1"/>
</dbReference>
<dbReference type="InterPro" id="IPR015424">
    <property type="entry name" value="PyrdxlP-dep_Trfase"/>
</dbReference>
<dbReference type="InterPro" id="IPR015421">
    <property type="entry name" value="PyrdxlP-dep_Trfase_major"/>
</dbReference>
<dbReference type="InterPro" id="IPR015422">
    <property type="entry name" value="PyrdxlP-dep_Trfase_small"/>
</dbReference>
<dbReference type="InterPro" id="IPR001085">
    <property type="entry name" value="Ser_HO-MeTrfase"/>
</dbReference>
<dbReference type="InterPro" id="IPR049943">
    <property type="entry name" value="Ser_HO-MeTrfase-like"/>
</dbReference>
<dbReference type="InterPro" id="IPR019798">
    <property type="entry name" value="Ser_HO-MeTrfase_PLP_BS"/>
</dbReference>
<dbReference type="InterPro" id="IPR039429">
    <property type="entry name" value="SHMT-like_dom"/>
</dbReference>
<dbReference type="NCBIfam" id="NF000586">
    <property type="entry name" value="PRK00011.1"/>
    <property type="match status" value="1"/>
</dbReference>
<dbReference type="PANTHER" id="PTHR11680">
    <property type="entry name" value="SERINE HYDROXYMETHYLTRANSFERASE"/>
    <property type="match status" value="1"/>
</dbReference>
<dbReference type="PANTHER" id="PTHR11680:SF50">
    <property type="entry name" value="SERINE HYDROXYMETHYLTRANSFERASE"/>
    <property type="match status" value="1"/>
</dbReference>
<dbReference type="Pfam" id="PF00464">
    <property type="entry name" value="SHMT"/>
    <property type="match status" value="1"/>
</dbReference>
<dbReference type="PIRSF" id="PIRSF000412">
    <property type="entry name" value="SHMT"/>
    <property type="match status" value="1"/>
</dbReference>
<dbReference type="SUPFAM" id="SSF53383">
    <property type="entry name" value="PLP-dependent transferases"/>
    <property type="match status" value="1"/>
</dbReference>
<dbReference type="PROSITE" id="PS00096">
    <property type="entry name" value="SHMT"/>
    <property type="match status" value="1"/>
</dbReference>
<accession>Q3YZ04</accession>
<comment type="function">
    <text evidence="1">Catalyzes the reversible interconversion of serine and glycine with tetrahydrofolate (THF) serving as the one-carbon carrier. This reaction serves as the major source of one-carbon groups required for the biosynthesis of purines, thymidylate, methionine, and other important biomolecules. Also exhibits THF-independent aldolase activity toward beta-hydroxyamino acids, producing glycine and aldehydes, via a retro-aldol mechanism.</text>
</comment>
<comment type="catalytic activity">
    <reaction evidence="1">
        <text>(6R)-5,10-methylene-5,6,7,8-tetrahydrofolate + glycine + H2O = (6S)-5,6,7,8-tetrahydrofolate + L-serine</text>
        <dbReference type="Rhea" id="RHEA:15481"/>
        <dbReference type="ChEBI" id="CHEBI:15377"/>
        <dbReference type="ChEBI" id="CHEBI:15636"/>
        <dbReference type="ChEBI" id="CHEBI:33384"/>
        <dbReference type="ChEBI" id="CHEBI:57305"/>
        <dbReference type="ChEBI" id="CHEBI:57453"/>
        <dbReference type="EC" id="2.1.2.1"/>
    </reaction>
</comment>
<comment type="cofactor">
    <cofactor evidence="1">
        <name>pyridoxal 5'-phosphate</name>
        <dbReference type="ChEBI" id="CHEBI:597326"/>
    </cofactor>
</comment>
<comment type="pathway">
    <text evidence="1">One-carbon metabolism; tetrahydrofolate interconversion.</text>
</comment>
<comment type="pathway">
    <text evidence="1">Amino-acid biosynthesis; glycine biosynthesis; glycine from L-serine: step 1/1.</text>
</comment>
<comment type="subunit">
    <text evidence="1">Homodimer.</text>
</comment>
<comment type="subcellular location">
    <subcellularLocation>
        <location evidence="1">Cytoplasm</location>
    </subcellularLocation>
</comment>
<comment type="similarity">
    <text evidence="1">Belongs to the SHMT family.</text>
</comment>
<gene>
    <name evidence="1" type="primary">glyA</name>
    <name type="ordered locus">SSON_2634</name>
</gene>
<evidence type="ECO:0000255" key="1">
    <source>
        <dbReference type="HAMAP-Rule" id="MF_00051"/>
    </source>
</evidence>
<protein>
    <recommendedName>
        <fullName evidence="1">Serine hydroxymethyltransferase</fullName>
        <shortName evidence="1">SHMT</shortName>
        <shortName evidence="1">Serine methylase</shortName>
        <ecNumber evidence="1">2.1.2.1</ecNumber>
    </recommendedName>
</protein>
<organism>
    <name type="scientific">Shigella sonnei (strain Ss046)</name>
    <dbReference type="NCBI Taxonomy" id="300269"/>
    <lineage>
        <taxon>Bacteria</taxon>
        <taxon>Pseudomonadati</taxon>
        <taxon>Pseudomonadota</taxon>
        <taxon>Gammaproteobacteria</taxon>
        <taxon>Enterobacterales</taxon>
        <taxon>Enterobacteriaceae</taxon>
        <taxon>Shigella</taxon>
    </lineage>
</organism>
<sequence length="417" mass="45301">MLKREMNIADYDAELWQAMEQEKVRQEEHIELIASENYTSPRVMQAQGSQLTNKYAEGYPGKRYYGGCEYVDIVEQLAIDRAKELFGADYANVQPHSGSQANFAVYTALLEPGDTVLGMNLAHGGHLTHGSPVNFSGKLYNIVPYGIDATGHIDYADLEKQAKEHKPKMIIGGFSAYSGVVDWAKMREIADSIGAYLFVDMAHVAGLVAAGVYPNPVPHAHVVTTTTHKTLAGPRGGLILAKGGSEELYKKLNSAVFPGGQGGPLMHVIAGKAVALKEAMEPEFKTYQQQVAKNAKAMVEVFLERGYKVVSGGTDNHLFLVDLVDKNLTGKEADAALGRANITVNKNSVPNDPKSPFVTSGIRVGTPAITRRGFKEAEAKELAGWMCDVLDSINDEAVIERIKGKVLDICARFPVYA</sequence>
<proteinExistence type="inferred from homology"/>